<dbReference type="EMBL" id="BC123214">
    <property type="protein sequence ID" value="AAI23215.1"/>
    <property type="molecule type" value="mRNA"/>
</dbReference>
<dbReference type="RefSeq" id="NP_001090348.1">
    <property type="nucleotide sequence ID" value="NM_001096879.1"/>
</dbReference>
<dbReference type="RefSeq" id="XP_018087649.1">
    <property type="nucleotide sequence ID" value="XM_018232160.1"/>
</dbReference>
<dbReference type="SMR" id="Q0IHC5"/>
<dbReference type="DNASU" id="779258"/>
<dbReference type="GeneID" id="779258"/>
<dbReference type="KEGG" id="xla:779258"/>
<dbReference type="AGR" id="Xenbase:XB-GENE-975365"/>
<dbReference type="CTD" id="779258"/>
<dbReference type="Xenbase" id="XB-GENE-975365">
    <property type="gene designation" value="tor4a.S"/>
</dbReference>
<dbReference type="OMA" id="EFAITGC"/>
<dbReference type="OrthoDB" id="9443236at2759"/>
<dbReference type="Proteomes" id="UP000186698">
    <property type="component" value="Chromosome 8S"/>
</dbReference>
<dbReference type="Bgee" id="779258">
    <property type="expression patterns" value="Expressed in lung and 15 other cell types or tissues"/>
</dbReference>
<dbReference type="GO" id="GO:0005788">
    <property type="term" value="C:endoplasmic reticulum lumen"/>
    <property type="evidence" value="ECO:0000318"/>
    <property type="project" value="GO_Central"/>
</dbReference>
<dbReference type="GO" id="GO:0016020">
    <property type="term" value="C:membrane"/>
    <property type="evidence" value="ECO:0007669"/>
    <property type="project" value="UniProtKB-SubCell"/>
</dbReference>
<dbReference type="GO" id="GO:0005635">
    <property type="term" value="C:nuclear envelope"/>
    <property type="evidence" value="ECO:0000318"/>
    <property type="project" value="GO_Central"/>
</dbReference>
<dbReference type="GO" id="GO:0005524">
    <property type="term" value="F:ATP binding"/>
    <property type="evidence" value="ECO:0007669"/>
    <property type="project" value="UniProtKB-KW"/>
</dbReference>
<dbReference type="GO" id="GO:0016887">
    <property type="term" value="F:ATP hydrolysis activity"/>
    <property type="evidence" value="ECO:0007669"/>
    <property type="project" value="InterPro"/>
</dbReference>
<dbReference type="FunFam" id="3.40.50.300:FF:001429">
    <property type="entry name" value="Torsin family protein C9orf167-like"/>
    <property type="match status" value="1"/>
</dbReference>
<dbReference type="Gene3D" id="3.40.50.300">
    <property type="entry name" value="P-loop containing nucleotide triphosphate hydrolases"/>
    <property type="match status" value="1"/>
</dbReference>
<dbReference type="InterPro" id="IPR001270">
    <property type="entry name" value="ClpA/B"/>
</dbReference>
<dbReference type="InterPro" id="IPR027417">
    <property type="entry name" value="P-loop_NTPase"/>
</dbReference>
<dbReference type="InterPro" id="IPR049337">
    <property type="entry name" value="TOR1A_C"/>
</dbReference>
<dbReference type="InterPro" id="IPR010448">
    <property type="entry name" value="Torsin"/>
</dbReference>
<dbReference type="PANTHER" id="PTHR10760">
    <property type="entry name" value="TORSIN"/>
    <property type="match status" value="1"/>
</dbReference>
<dbReference type="PANTHER" id="PTHR10760:SF1">
    <property type="entry name" value="TORSIN-4A"/>
    <property type="match status" value="1"/>
</dbReference>
<dbReference type="Pfam" id="PF21376">
    <property type="entry name" value="TOR1A_C"/>
    <property type="match status" value="1"/>
</dbReference>
<dbReference type="Pfam" id="PF06309">
    <property type="entry name" value="Torsin"/>
    <property type="match status" value="1"/>
</dbReference>
<dbReference type="PRINTS" id="PR00300">
    <property type="entry name" value="CLPPROTEASEA"/>
</dbReference>
<dbReference type="SUPFAM" id="SSF52540">
    <property type="entry name" value="P-loop containing nucleoside triphosphate hydrolases"/>
    <property type="match status" value="1"/>
</dbReference>
<keyword id="KW-0067">ATP-binding</keyword>
<keyword id="KW-0472">Membrane</keyword>
<keyword id="KW-0547">Nucleotide-binding</keyword>
<keyword id="KW-1185">Reference proteome</keyword>
<keyword id="KW-0812">Transmembrane</keyword>
<keyword id="KW-1133">Transmembrane helix</keyword>
<protein>
    <recommendedName>
        <fullName>Torsin-4A-A</fullName>
    </recommendedName>
    <alternativeName>
        <fullName>Torsin family 4 member A-A</fullName>
    </alternativeName>
</protein>
<name>TO4AA_XENLA</name>
<accession>Q0IHC5</accession>
<comment type="subcellular location">
    <subcellularLocation>
        <location evidence="2">Membrane</location>
        <topology evidence="2">Single-pass membrane protein</topology>
    </subcellularLocation>
</comment>
<comment type="similarity">
    <text evidence="2">Belongs to the ClpA/ClpB family. Torsin subfamily.</text>
</comment>
<evidence type="ECO:0000255" key="1"/>
<evidence type="ECO:0000305" key="2"/>
<organism>
    <name type="scientific">Xenopus laevis</name>
    <name type="common">African clawed frog</name>
    <dbReference type="NCBI Taxonomy" id="8355"/>
    <lineage>
        <taxon>Eukaryota</taxon>
        <taxon>Metazoa</taxon>
        <taxon>Chordata</taxon>
        <taxon>Craniata</taxon>
        <taxon>Vertebrata</taxon>
        <taxon>Euteleostomi</taxon>
        <taxon>Amphibia</taxon>
        <taxon>Batrachia</taxon>
        <taxon>Anura</taxon>
        <taxon>Pipoidea</taxon>
        <taxon>Pipidae</taxon>
        <taxon>Xenopodinae</taxon>
        <taxon>Xenopus</taxon>
        <taxon>Xenopus</taxon>
    </lineage>
</organism>
<sequence length="420" mass="48495">MEETESSTQTPVPQHGISLASYPVRAVIRMRRKIRTLKKSRLQLDLTGGRSLDSAKASLRRQISMDRATLFKSSTYEKQQYFNFDTPTLEKLALNSQIRKRNRKKSRHVLYPGNVRKCLPVEHKSKAKRCLLLFIGIVCFQILNAIENLDDNLQKYDLDGLEKTLQREVFGQKRAIEKLMDHLQDYLATHYHNKPLVLSFNGPSGVGKSHTGRLLAKHFRSIMDNDFVLQYYTMHNCPNENDVTQCQSEMSGLISEMISRAEIEEKIPVFIFDEVEVMPVALLDVLHRYFQLNQSNEYLNAVYILISNIGGNEITKFVLQNASNDFLNLPQELHQIVISSLQKHHSLWDVAEIVPFTLLEKKHILDCFLDELLREGFYPDHSNIESLAGQLRYYTKENKEYSISGCKQVVAKVNLLQPYT</sequence>
<reference key="1">
    <citation type="submission" date="2006-09" db="EMBL/GenBank/DDBJ databases">
        <authorList>
            <consortium name="NIH - Xenopus Gene Collection (XGC) project"/>
        </authorList>
    </citation>
    <scope>NUCLEOTIDE SEQUENCE [LARGE SCALE MRNA]</scope>
    <source>
        <tissue>Fat body</tissue>
    </source>
</reference>
<gene>
    <name type="primary">tor4a-a</name>
</gene>
<proteinExistence type="evidence at transcript level"/>
<feature type="chain" id="PRO_0000287492" description="Torsin-4A-A">
    <location>
        <begin position="1"/>
        <end position="420"/>
    </location>
</feature>
<feature type="transmembrane region" description="Helical" evidence="1">
    <location>
        <begin position="130"/>
        <end position="150"/>
    </location>
</feature>
<feature type="binding site" evidence="1">
    <location>
        <begin position="202"/>
        <end position="209"/>
    </location>
    <ligand>
        <name>ATP</name>
        <dbReference type="ChEBI" id="CHEBI:30616"/>
    </ligand>
</feature>